<keyword id="KW-0143">Chaperone</keyword>
<keyword id="KW-0963">Cytoplasm</keyword>
<keyword id="KW-0346">Stress response</keyword>
<dbReference type="EMBL" id="CP000381">
    <property type="protein sequence ID" value="ABX72707.1"/>
    <property type="molecule type" value="Genomic_DNA"/>
</dbReference>
<dbReference type="RefSeq" id="WP_002214370.1">
    <property type="nucleotide sequence ID" value="NC_010120.1"/>
</dbReference>
<dbReference type="SMR" id="A9M2A3"/>
<dbReference type="GeneID" id="93386624"/>
<dbReference type="KEGG" id="nmn:NMCC_0507"/>
<dbReference type="HOGENOM" id="CLU_057217_6_2_4"/>
<dbReference type="Proteomes" id="UP000001177">
    <property type="component" value="Chromosome"/>
</dbReference>
<dbReference type="GO" id="GO:0005829">
    <property type="term" value="C:cytosol"/>
    <property type="evidence" value="ECO:0007669"/>
    <property type="project" value="TreeGrafter"/>
</dbReference>
<dbReference type="GO" id="GO:0000774">
    <property type="term" value="F:adenyl-nucleotide exchange factor activity"/>
    <property type="evidence" value="ECO:0007669"/>
    <property type="project" value="InterPro"/>
</dbReference>
<dbReference type="GO" id="GO:0042803">
    <property type="term" value="F:protein homodimerization activity"/>
    <property type="evidence" value="ECO:0007669"/>
    <property type="project" value="InterPro"/>
</dbReference>
<dbReference type="GO" id="GO:0051087">
    <property type="term" value="F:protein-folding chaperone binding"/>
    <property type="evidence" value="ECO:0007669"/>
    <property type="project" value="InterPro"/>
</dbReference>
<dbReference type="GO" id="GO:0051082">
    <property type="term" value="F:unfolded protein binding"/>
    <property type="evidence" value="ECO:0007669"/>
    <property type="project" value="TreeGrafter"/>
</dbReference>
<dbReference type="GO" id="GO:0006457">
    <property type="term" value="P:protein folding"/>
    <property type="evidence" value="ECO:0007669"/>
    <property type="project" value="InterPro"/>
</dbReference>
<dbReference type="CDD" id="cd00446">
    <property type="entry name" value="GrpE"/>
    <property type="match status" value="1"/>
</dbReference>
<dbReference type="FunFam" id="2.30.22.10:FF:000001">
    <property type="entry name" value="Protein GrpE"/>
    <property type="match status" value="1"/>
</dbReference>
<dbReference type="Gene3D" id="3.90.20.20">
    <property type="match status" value="1"/>
</dbReference>
<dbReference type="Gene3D" id="2.30.22.10">
    <property type="entry name" value="Head domain of nucleotide exchange factor GrpE"/>
    <property type="match status" value="1"/>
</dbReference>
<dbReference type="HAMAP" id="MF_01151">
    <property type="entry name" value="GrpE"/>
    <property type="match status" value="1"/>
</dbReference>
<dbReference type="InterPro" id="IPR000740">
    <property type="entry name" value="GrpE"/>
</dbReference>
<dbReference type="InterPro" id="IPR013805">
    <property type="entry name" value="GrpE_coiled_coil"/>
</dbReference>
<dbReference type="InterPro" id="IPR009012">
    <property type="entry name" value="GrpE_head"/>
</dbReference>
<dbReference type="NCBIfam" id="NF010737">
    <property type="entry name" value="PRK14139.1"/>
    <property type="match status" value="1"/>
</dbReference>
<dbReference type="NCBIfam" id="NF010738">
    <property type="entry name" value="PRK14140.1"/>
    <property type="match status" value="1"/>
</dbReference>
<dbReference type="PANTHER" id="PTHR21237">
    <property type="entry name" value="GRPE PROTEIN"/>
    <property type="match status" value="1"/>
</dbReference>
<dbReference type="PANTHER" id="PTHR21237:SF23">
    <property type="entry name" value="GRPE PROTEIN HOMOLOG, MITOCHONDRIAL"/>
    <property type="match status" value="1"/>
</dbReference>
<dbReference type="Pfam" id="PF01025">
    <property type="entry name" value="GrpE"/>
    <property type="match status" value="1"/>
</dbReference>
<dbReference type="PRINTS" id="PR00773">
    <property type="entry name" value="GRPEPROTEIN"/>
</dbReference>
<dbReference type="SUPFAM" id="SSF58014">
    <property type="entry name" value="Coiled-coil domain of nucleotide exchange factor GrpE"/>
    <property type="match status" value="1"/>
</dbReference>
<dbReference type="SUPFAM" id="SSF51064">
    <property type="entry name" value="Head domain of nucleotide exchange factor GrpE"/>
    <property type="match status" value="1"/>
</dbReference>
<dbReference type="PROSITE" id="PS01071">
    <property type="entry name" value="GRPE"/>
    <property type="match status" value="1"/>
</dbReference>
<protein>
    <recommendedName>
        <fullName evidence="1">Protein GrpE</fullName>
    </recommendedName>
    <alternativeName>
        <fullName evidence="1">HSP-70 cofactor</fullName>
    </alternativeName>
</protein>
<reference key="1">
    <citation type="journal article" date="2008" name="Genomics">
        <title>Characterization of ST-4821 complex, a unique Neisseria meningitidis clone.</title>
        <authorList>
            <person name="Peng J."/>
            <person name="Yang L."/>
            <person name="Yang F."/>
            <person name="Yang J."/>
            <person name="Yan Y."/>
            <person name="Nie H."/>
            <person name="Zhang X."/>
            <person name="Xiong Z."/>
            <person name="Jiang Y."/>
            <person name="Cheng F."/>
            <person name="Xu X."/>
            <person name="Chen S."/>
            <person name="Sun L."/>
            <person name="Li W."/>
            <person name="Shen Y."/>
            <person name="Shao Z."/>
            <person name="Liang X."/>
            <person name="Xu J."/>
            <person name="Jin Q."/>
        </authorList>
    </citation>
    <scope>NUCLEOTIDE SEQUENCE [LARGE SCALE GENOMIC DNA]</scope>
    <source>
        <strain>053442</strain>
    </source>
</reference>
<feature type="chain" id="PRO_1000137587" description="Protein GrpE">
    <location>
        <begin position="1"/>
        <end position="192"/>
    </location>
</feature>
<proteinExistence type="inferred from homology"/>
<gene>
    <name evidence="1" type="primary">grpE</name>
    <name type="ordered locus">NMCC_0507</name>
</gene>
<organism>
    <name type="scientific">Neisseria meningitidis serogroup C (strain 053442)</name>
    <dbReference type="NCBI Taxonomy" id="374833"/>
    <lineage>
        <taxon>Bacteria</taxon>
        <taxon>Pseudomonadati</taxon>
        <taxon>Pseudomonadota</taxon>
        <taxon>Betaproteobacteria</taxon>
        <taxon>Neisseriales</taxon>
        <taxon>Neisseriaceae</taxon>
        <taxon>Neisseria</taxon>
    </lineage>
</organism>
<name>GRPE_NEIM0</name>
<sequence length="192" mass="21322">MSEQTQQQNSEEAVENVEAVETVETVGNADGVQEQAAAEPAYEDLQARIAELEAQLKDEQLRALANEQNLRRRHQQEIADTHKFAGQKFAVEMLPVKDYLEMALLDQSGNFDALKMGVQMTLNELQKAFDATQIKEINPKAGDKLDPNIHQAMQAVASEQEPNTVVGVMKKGYTLSDRVLRPAMVTVAQKEA</sequence>
<accession>A9M2A3</accession>
<comment type="function">
    <text evidence="1">Participates actively in the response to hyperosmotic and heat shock by preventing the aggregation of stress-denatured proteins, in association with DnaK and GrpE. It is the nucleotide exchange factor for DnaK and may function as a thermosensor. Unfolded proteins bind initially to DnaJ; upon interaction with the DnaJ-bound protein, DnaK hydrolyzes its bound ATP, resulting in the formation of a stable complex. GrpE releases ADP from DnaK; ATP binding to DnaK triggers the release of the substrate protein, thus completing the reaction cycle. Several rounds of ATP-dependent interactions between DnaJ, DnaK and GrpE are required for fully efficient folding.</text>
</comment>
<comment type="subunit">
    <text evidence="1">Homodimer.</text>
</comment>
<comment type="subcellular location">
    <subcellularLocation>
        <location evidence="1">Cytoplasm</location>
    </subcellularLocation>
</comment>
<comment type="similarity">
    <text evidence="1">Belongs to the GrpE family.</text>
</comment>
<evidence type="ECO:0000255" key="1">
    <source>
        <dbReference type="HAMAP-Rule" id="MF_01151"/>
    </source>
</evidence>